<evidence type="ECO:0000255" key="1">
    <source>
        <dbReference type="HAMAP-Rule" id="MF_00376"/>
    </source>
</evidence>
<evidence type="ECO:0000305" key="2"/>
<feature type="chain" id="PRO_0000173014" description="Dephospho-CoA kinase">
    <location>
        <begin position="1"/>
        <end position="197"/>
    </location>
</feature>
<feature type="domain" description="DPCK" evidence="1">
    <location>
        <begin position="2"/>
        <end position="197"/>
    </location>
</feature>
<feature type="binding site" evidence="1">
    <location>
        <begin position="10"/>
        <end position="15"/>
    </location>
    <ligand>
        <name>ATP</name>
        <dbReference type="ChEBI" id="CHEBI:30616"/>
    </ligand>
</feature>
<comment type="function">
    <text evidence="1">Catalyzes the phosphorylation of the 3'-hydroxyl group of dephosphocoenzyme A to form coenzyme A.</text>
</comment>
<comment type="catalytic activity">
    <reaction evidence="1">
        <text>3'-dephospho-CoA + ATP = ADP + CoA + H(+)</text>
        <dbReference type="Rhea" id="RHEA:18245"/>
        <dbReference type="ChEBI" id="CHEBI:15378"/>
        <dbReference type="ChEBI" id="CHEBI:30616"/>
        <dbReference type="ChEBI" id="CHEBI:57287"/>
        <dbReference type="ChEBI" id="CHEBI:57328"/>
        <dbReference type="ChEBI" id="CHEBI:456216"/>
        <dbReference type="EC" id="2.7.1.24"/>
    </reaction>
</comment>
<comment type="pathway">
    <text evidence="1">Cofactor biosynthesis; coenzyme A biosynthesis; CoA from (R)-pantothenate: step 5/5.</text>
</comment>
<comment type="subcellular location">
    <subcellularLocation>
        <location evidence="1">Cytoplasm</location>
    </subcellularLocation>
</comment>
<comment type="similarity">
    <text evidence="1 2">Belongs to the CoaE family.</text>
</comment>
<comment type="sequence caution" evidence="2">
    <conflict type="erroneous initiation">
        <sequence resource="EMBL-CDS" id="AAZ51027"/>
    </conflict>
</comment>
<accession>P58102</accession>
<accession>Q490E1</accession>
<keyword id="KW-0067">ATP-binding</keyword>
<keyword id="KW-0173">Coenzyme A biosynthesis</keyword>
<keyword id="KW-0963">Cytoplasm</keyword>
<keyword id="KW-0418">Kinase</keyword>
<keyword id="KW-0547">Nucleotide-binding</keyword>
<keyword id="KW-1185">Reference proteome</keyword>
<keyword id="KW-0808">Transferase</keyword>
<sequence length="197" mass="21967">MIIGITGGIASGKSTVVKVIRKAGYQVIDADQVVHDLQEKGGRLYEALREAFGNQILKADGELDRTKLSEMLFSNPDNMATSSAIQNQIIKEELAAKRDHLAQSQAIFFMDIPLLMELGYQDWFDAIWLVYVDAQTQLQRLMARNRLDKGKARQRIASQLPIEEKKPYASLVIDNSGDIAALIKQVQSALLLLANPR</sequence>
<dbReference type="EC" id="2.7.1.24" evidence="1"/>
<dbReference type="EMBL" id="AE004092">
    <property type="protein sequence ID" value="AAK33499.1"/>
    <property type="molecule type" value="Genomic_DNA"/>
</dbReference>
<dbReference type="EMBL" id="CP000017">
    <property type="protein sequence ID" value="AAZ51027.1"/>
    <property type="status" value="ALT_INIT"/>
    <property type="molecule type" value="Genomic_DNA"/>
</dbReference>
<dbReference type="RefSeq" id="NP_268778.1">
    <property type="nucleotide sequence ID" value="NC_002737.2"/>
</dbReference>
<dbReference type="SMR" id="P58102"/>
<dbReference type="PaxDb" id="1314-HKU360_00433"/>
<dbReference type="KEGG" id="spy:SPy_0498"/>
<dbReference type="KEGG" id="spz:M5005_Spy0409"/>
<dbReference type="PATRIC" id="fig|160490.10.peg.424"/>
<dbReference type="HOGENOM" id="CLU_057180_0_0_9"/>
<dbReference type="OMA" id="CQMDIEQ"/>
<dbReference type="UniPathway" id="UPA00241">
    <property type="reaction ID" value="UER00356"/>
</dbReference>
<dbReference type="Proteomes" id="UP000000750">
    <property type="component" value="Chromosome"/>
</dbReference>
<dbReference type="GO" id="GO:0005737">
    <property type="term" value="C:cytoplasm"/>
    <property type="evidence" value="ECO:0007669"/>
    <property type="project" value="UniProtKB-SubCell"/>
</dbReference>
<dbReference type="GO" id="GO:0005524">
    <property type="term" value="F:ATP binding"/>
    <property type="evidence" value="ECO:0007669"/>
    <property type="project" value="UniProtKB-UniRule"/>
</dbReference>
<dbReference type="GO" id="GO:0004140">
    <property type="term" value="F:dephospho-CoA kinase activity"/>
    <property type="evidence" value="ECO:0007669"/>
    <property type="project" value="UniProtKB-UniRule"/>
</dbReference>
<dbReference type="GO" id="GO:0015937">
    <property type="term" value="P:coenzyme A biosynthetic process"/>
    <property type="evidence" value="ECO:0007669"/>
    <property type="project" value="UniProtKB-UniRule"/>
</dbReference>
<dbReference type="CDD" id="cd02022">
    <property type="entry name" value="DPCK"/>
    <property type="match status" value="1"/>
</dbReference>
<dbReference type="FunFam" id="3.40.50.300:FF:000991">
    <property type="entry name" value="Dephospho-CoA kinase"/>
    <property type="match status" value="1"/>
</dbReference>
<dbReference type="Gene3D" id="3.40.50.300">
    <property type="entry name" value="P-loop containing nucleotide triphosphate hydrolases"/>
    <property type="match status" value="1"/>
</dbReference>
<dbReference type="HAMAP" id="MF_00376">
    <property type="entry name" value="Dephospho_CoA_kinase"/>
    <property type="match status" value="1"/>
</dbReference>
<dbReference type="InterPro" id="IPR001977">
    <property type="entry name" value="Depp_CoAkinase"/>
</dbReference>
<dbReference type="InterPro" id="IPR027417">
    <property type="entry name" value="P-loop_NTPase"/>
</dbReference>
<dbReference type="NCBIfam" id="TIGR00152">
    <property type="entry name" value="dephospho-CoA kinase"/>
    <property type="match status" value="1"/>
</dbReference>
<dbReference type="PANTHER" id="PTHR10695:SF46">
    <property type="entry name" value="BIFUNCTIONAL COENZYME A SYNTHASE-RELATED"/>
    <property type="match status" value="1"/>
</dbReference>
<dbReference type="PANTHER" id="PTHR10695">
    <property type="entry name" value="DEPHOSPHO-COA KINASE-RELATED"/>
    <property type="match status" value="1"/>
</dbReference>
<dbReference type="Pfam" id="PF01121">
    <property type="entry name" value="CoaE"/>
    <property type="match status" value="1"/>
</dbReference>
<dbReference type="SUPFAM" id="SSF52540">
    <property type="entry name" value="P-loop containing nucleoside triphosphate hydrolases"/>
    <property type="match status" value="1"/>
</dbReference>
<dbReference type="PROSITE" id="PS51219">
    <property type="entry name" value="DPCK"/>
    <property type="match status" value="1"/>
</dbReference>
<name>COAE_STRP1</name>
<gene>
    <name evidence="1" type="primary">coaE</name>
    <name type="ordered locus">SPy_0498</name>
    <name type="ordered locus">M5005_Spy0409</name>
</gene>
<proteinExistence type="inferred from homology"/>
<protein>
    <recommendedName>
        <fullName evidence="1">Dephospho-CoA kinase</fullName>
        <ecNumber evidence="1">2.7.1.24</ecNumber>
    </recommendedName>
    <alternativeName>
        <fullName evidence="1">Dephosphocoenzyme A kinase</fullName>
    </alternativeName>
</protein>
<reference key="1">
    <citation type="journal article" date="2001" name="Proc. Natl. Acad. Sci. U.S.A.">
        <title>Complete genome sequence of an M1 strain of Streptococcus pyogenes.</title>
        <authorList>
            <person name="Ferretti J.J."/>
            <person name="McShan W.M."/>
            <person name="Ajdic D.J."/>
            <person name="Savic D.J."/>
            <person name="Savic G."/>
            <person name="Lyon K."/>
            <person name="Primeaux C."/>
            <person name="Sezate S."/>
            <person name="Suvorov A.N."/>
            <person name="Kenton S."/>
            <person name="Lai H.S."/>
            <person name="Lin S.P."/>
            <person name="Qian Y."/>
            <person name="Jia H.G."/>
            <person name="Najar F.Z."/>
            <person name="Ren Q."/>
            <person name="Zhu H."/>
            <person name="Song L."/>
            <person name="White J."/>
            <person name="Yuan X."/>
            <person name="Clifton S.W."/>
            <person name="Roe B.A."/>
            <person name="McLaughlin R.E."/>
        </authorList>
    </citation>
    <scope>NUCLEOTIDE SEQUENCE [LARGE SCALE GENOMIC DNA]</scope>
    <source>
        <strain>ATCC 700294 / SF370 / Serotype M1</strain>
    </source>
</reference>
<reference key="2">
    <citation type="journal article" date="2005" name="J. Infect. Dis.">
        <title>Evolutionary origin and emergence of a highly successful clone of serotype M1 group A Streptococcus involved multiple horizontal gene transfer events.</title>
        <authorList>
            <person name="Sumby P."/>
            <person name="Porcella S.F."/>
            <person name="Madrigal A.G."/>
            <person name="Barbian K.D."/>
            <person name="Virtaneva K."/>
            <person name="Ricklefs S.M."/>
            <person name="Sturdevant D.E."/>
            <person name="Graham M.R."/>
            <person name="Vuopio-Varkila J."/>
            <person name="Hoe N.P."/>
            <person name="Musser J.M."/>
        </authorList>
    </citation>
    <scope>NUCLEOTIDE SEQUENCE [LARGE SCALE GENOMIC DNA]</scope>
    <source>
        <strain>ATCC BAA-947 / MGAS5005 / Serotype M1</strain>
    </source>
</reference>
<organism>
    <name type="scientific">Streptococcus pyogenes serotype M1</name>
    <dbReference type="NCBI Taxonomy" id="301447"/>
    <lineage>
        <taxon>Bacteria</taxon>
        <taxon>Bacillati</taxon>
        <taxon>Bacillota</taxon>
        <taxon>Bacilli</taxon>
        <taxon>Lactobacillales</taxon>
        <taxon>Streptococcaceae</taxon>
        <taxon>Streptococcus</taxon>
    </lineage>
</organism>